<evidence type="ECO:0000250" key="1"/>
<evidence type="ECO:0000250" key="2">
    <source>
        <dbReference type="UniProtKB" id="Q9VRP5"/>
    </source>
</evidence>
<evidence type="ECO:0000255" key="3">
    <source>
        <dbReference type="PROSITE-ProRule" id="PRU10092"/>
    </source>
</evidence>
<evidence type="ECO:0000255" key="4">
    <source>
        <dbReference type="PROSITE-ProRule" id="PRU10093"/>
    </source>
</evidence>
<evidence type="ECO:0000256" key="5">
    <source>
        <dbReference type="SAM" id="MobiDB-lite"/>
    </source>
</evidence>
<evidence type="ECO:0000305" key="6"/>
<comment type="function">
    <text evidence="2">Required for maintaining multiple types of adult stem cells, including male and female germline, epithelial follicle cell and intestinal stem cells. May function as a transcriptional repressor by continually deubiquiting histone H2B at the promoters of genes critical for cellular differentiation, thereby preventing histone H3 'Lys-4' trimethylation (H3K4). Controls selective autophagy activation by ubiquitinated proteins.</text>
</comment>
<comment type="catalytic activity">
    <reaction>
        <text>Thiol-dependent hydrolysis of ester, thioester, amide, peptide and isopeptide bonds formed by the C-terminal Gly of ubiquitin (a 76-residue protein attached to proteins as an intracellular targeting signal).</text>
        <dbReference type="EC" id="3.4.19.12"/>
    </reaction>
</comment>
<comment type="subunit">
    <text evidence="1">Interacts with atms/PAF1, but not with CycT.</text>
</comment>
<comment type="subcellular location">
    <subcellularLocation>
        <location evidence="1">Nucleus</location>
        <location evidence="1">Nucleolus</location>
    </subcellularLocation>
</comment>
<comment type="similarity">
    <text evidence="6">Belongs to the peptidase C19 family.</text>
</comment>
<dbReference type="EC" id="3.4.19.12"/>
<dbReference type="EMBL" id="CH940647">
    <property type="protein sequence ID" value="EDW69346.1"/>
    <property type="molecule type" value="Genomic_DNA"/>
</dbReference>
<dbReference type="RefSeq" id="XP_002047004.2">
    <property type="nucleotide sequence ID" value="XM_002046968.2"/>
</dbReference>
<dbReference type="SMR" id="B4LG38"/>
<dbReference type="FunCoup" id="B4LG38">
    <property type="interactions" value="524"/>
</dbReference>
<dbReference type="STRING" id="7244.B4LG38"/>
<dbReference type="GeneID" id="6622549"/>
<dbReference type="KEGG" id="dvi:6622549"/>
<dbReference type="CTD" id="38648"/>
<dbReference type="eggNOG" id="KOG1865">
    <property type="taxonomic scope" value="Eukaryota"/>
</dbReference>
<dbReference type="HOGENOM" id="CLU_006208_0_0_1"/>
<dbReference type="InParanoid" id="B4LG38"/>
<dbReference type="OMA" id="VCAMAKT"/>
<dbReference type="OrthoDB" id="420187at2759"/>
<dbReference type="PhylomeDB" id="B4LG38"/>
<dbReference type="ChiTaRS" id="scny">
    <property type="organism name" value="fly"/>
</dbReference>
<dbReference type="Proteomes" id="UP000008792">
    <property type="component" value="Unassembled WGS sequence"/>
</dbReference>
<dbReference type="GO" id="GO:0005829">
    <property type="term" value="C:cytosol"/>
    <property type="evidence" value="ECO:0007669"/>
    <property type="project" value="TreeGrafter"/>
</dbReference>
<dbReference type="GO" id="GO:0005730">
    <property type="term" value="C:nucleolus"/>
    <property type="evidence" value="ECO:0000250"/>
    <property type="project" value="UniProtKB"/>
</dbReference>
<dbReference type="GO" id="GO:0004843">
    <property type="term" value="F:cysteine-type deubiquitinase activity"/>
    <property type="evidence" value="ECO:0000250"/>
    <property type="project" value="UniProtKB"/>
</dbReference>
<dbReference type="GO" id="GO:0061578">
    <property type="term" value="F:K63-linked deubiquitinase activity"/>
    <property type="evidence" value="ECO:0007669"/>
    <property type="project" value="EnsemblMetazoa"/>
</dbReference>
<dbReference type="GO" id="GO:0030718">
    <property type="term" value="P:germ-line stem cell population maintenance"/>
    <property type="evidence" value="ECO:0000250"/>
    <property type="project" value="UniProtKB"/>
</dbReference>
<dbReference type="GO" id="GO:0031507">
    <property type="term" value="P:heterochromatin formation"/>
    <property type="evidence" value="ECO:0007669"/>
    <property type="project" value="EnsemblMetazoa"/>
</dbReference>
<dbReference type="GO" id="GO:0002785">
    <property type="term" value="P:negative regulation of antimicrobial peptide production"/>
    <property type="evidence" value="ECO:0007669"/>
    <property type="project" value="EnsemblMetazoa"/>
</dbReference>
<dbReference type="GO" id="GO:0045824">
    <property type="term" value="P:negative regulation of innate immune response"/>
    <property type="evidence" value="ECO:0007669"/>
    <property type="project" value="EnsemblMetazoa"/>
</dbReference>
<dbReference type="GO" id="GO:0016242">
    <property type="term" value="P:negative regulation of macroautophagy"/>
    <property type="evidence" value="ECO:0000250"/>
    <property type="project" value="UniProtKB"/>
</dbReference>
<dbReference type="GO" id="GO:0061060">
    <property type="term" value="P:negative regulation of peptidoglycan recognition protein signaling pathway"/>
    <property type="evidence" value="ECO:0007669"/>
    <property type="project" value="EnsemblMetazoa"/>
</dbReference>
<dbReference type="GO" id="GO:1901800">
    <property type="term" value="P:positive regulation of proteasomal protein catabolic process"/>
    <property type="evidence" value="ECO:0007669"/>
    <property type="project" value="EnsemblMetazoa"/>
</dbReference>
<dbReference type="GO" id="GO:0016579">
    <property type="term" value="P:protein deubiquitination"/>
    <property type="evidence" value="ECO:0000250"/>
    <property type="project" value="UniProtKB"/>
</dbReference>
<dbReference type="GO" id="GO:0006508">
    <property type="term" value="P:proteolysis"/>
    <property type="evidence" value="ECO:0007669"/>
    <property type="project" value="UniProtKB-KW"/>
</dbReference>
<dbReference type="GO" id="GO:0042981">
    <property type="term" value="P:regulation of apoptotic process"/>
    <property type="evidence" value="ECO:0007669"/>
    <property type="project" value="EnsemblMetazoa"/>
</dbReference>
<dbReference type="GO" id="GO:0035019">
    <property type="term" value="P:somatic stem cell population maintenance"/>
    <property type="evidence" value="ECO:0000250"/>
    <property type="project" value="UniProtKB"/>
</dbReference>
<dbReference type="CDD" id="cd02661">
    <property type="entry name" value="Peptidase_C19E"/>
    <property type="match status" value="1"/>
</dbReference>
<dbReference type="FunFam" id="3.90.70.10:FF:000085">
    <property type="entry name" value="Ubiquitin carboxyl-terminal hydrolase 36"/>
    <property type="match status" value="1"/>
</dbReference>
<dbReference type="Gene3D" id="3.90.70.10">
    <property type="entry name" value="Cysteine proteinases"/>
    <property type="match status" value="1"/>
</dbReference>
<dbReference type="InterPro" id="IPR038765">
    <property type="entry name" value="Papain-like_cys_pep_sf"/>
</dbReference>
<dbReference type="InterPro" id="IPR050164">
    <property type="entry name" value="Peptidase_C19"/>
</dbReference>
<dbReference type="InterPro" id="IPR001394">
    <property type="entry name" value="Peptidase_C19_UCH"/>
</dbReference>
<dbReference type="InterPro" id="IPR018200">
    <property type="entry name" value="USP_CS"/>
</dbReference>
<dbReference type="InterPro" id="IPR028889">
    <property type="entry name" value="USP_dom"/>
</dbReference>
<dbReference type="PANTHER" id="PTHR24006">
    <property type="entry name" value="UBIQUITIN CARBOXYL-TERMINAL HYDROLASE"/>
    <property type="match status" value="1"/>
</dbReference>
<dbReference type="PANTHER" id="PTHR24006:SF758">
    <property type="entry name" value="UBIQUITIN CARBOXYL-TERMINAL HYDROLASE 36"/>
    <property type="match status" value="1"/>
</dbReference>
<dbReference type="Pfam" id="PF00443">
    <property type="entry name" value="UCH"/>
    <property type="match status" value="1"/>
</dbReference>
<dbReference type="SUPFAM" id="SSF54001">
    <property type="entry name" value="Cysteine proteinases"/>
    <property type="match status" value="1"/>
</dbReference>
<dbReference type="PROSITE" id="PS00972">
    <property type="entry name" value="USP_1"/>
    <property type="match status" value="1"/>
</dbReference>
<dbReference type="PROSITE" id="PS00973">
    <property type="entry name" value="USP_2"/>
    <property type="match status" value="1"/>
</dbReference>
<dbReference type="PROSITE" id="PS50235">
    <property type="entry name" value="USP_3"/>
    <property type="match status" value="1"/>
</dbReference>
<reference key="1">
    <citation type="journal article" date="2007" name="Nature">
        <title>Evolution of genes and genomes on the Drosophila phylogeny.</title>
        <authorList>
            <consortium name="Drosophila 12 genomes consortium"/>
        </authorList>
    </citation>
    <scope>NUCLEOTIDE SEQUENCE [LARGE SCALE GENOMIC DNA]</scope>
    <source>
        <strain>Tucson 15010-1051.87</strain>
    </source>
</reference>
<name>UBP36_DROVI</name>
<feature type="chain" id="PRO_0000378503" description="Ubiquitin carboxyl-terminal hydrolase 36">
    <location>
        <begin position="1"/>
        <end position="1214"/>
    </location>
</feature>
<feature type="domain" description="USP">
    <location>
        <begin position="192"/>
        <end position="502"/>
    </location>
</feature>
<feature type="region of interest" description="Disordered" evidence="5">
    <location>
        <begin position="124"/>
        <end position="169"/>
    </location>
</feature>
<feature type="region of interest" description="Disordered" evidence="5">
    <location>
        <begin position="509"/>
        <end position="532"/>
    </location>
</feature>
<feature type="region of interest" description="Disordered" evidence="5">
    <location>
        <begin position="631"/>
        <end position="819"/>
    </location>
</feature>
<feature type="region of interest" description="Disordered" evidence="5">
    <location>
        <begin position="836"/>
        <end position="964"/>
    </location>
</feature>
<feature type="region of interest" description="Disordered" evidence="5">
    <location>
        <begin position="977"/>
        <end position="1001"/>
    </location>
</feature>
<feature type="region of interest" description="Disordered" evidence="5">
    <location>
        <begin position="1048"/>
        <end position="1161"/>
    </location>
</feature>
<feature type="region of interest" description="Disordered" evidence="5">
    <location>
        <begin position="1176"/>
        <end position="1214"/>
    </location>
</feature>
<feature type="compositionally biased region" description="Low complexity" evidence="5">
    <location>
        <begin position="132"/>
        <end position="143"/>
    </location>
</feature>
<feature type="compositionally biased region" description="Polar residues" evidence="5">
    <location>
        <begin position="144"/>
        <end position="161"/>
    </location>
</feature>
<feature type="compositionally biased region" description="Low complexity" evidence="5">
    <location>
        <begin position="509"/>
        <end position="523"/>
    </location>
</feature>
<feature type="compositionally biased region" description="Low complexity" evidence="5">
    <location>
        <begin position="633"/>
        <end position="651"/>
    </location>
</feature>
<feature type="compositionally biased region" description="Acidic residues" evidence="5">
    <location>
        <begin position="666"/>
        <end position="685"/>
    </location>
</feature>
<feature type="compositionally biased region" description="Low complexity" evidence="5">
    <location>
        <begin position="735"/>
        <end position="751"/>
    </location>
</feature>
<feature type="compositionally biased region" description="Low complexity" evidence="5">
    <location>
        <begin position="785"/>
        <end position="816"/>
    </location>
</feature>
<feature type="compositionally biased region" description="Polar residues" evidence="5">
    <location>
        <begin position="856"/>
        <end position="868"/>
    </location>
</feature>
<feature type="compositionally biased region" description="Low complexity" evidence="5">
    <location>
        <begin position="869"/>
        <end position="878"/>
    </location>
</feature>
<feature type="compositionally biased region" description="Acidic residues" evidence="5">
    <location>
        <begin position="915"/>
        <end position="942"/>
    </location>
</feature>
<feature type="compositionally biased region" description="Polar residues" evidence="5">
    <location>
        <begin position="983"/>
        <end position="1001"/>
    </location>
</feature>
<feature type="compositionally biased region" description="Low complexity" evidence="5">
    <location>
        <begin position="1058"/>
        <end position="1076"/>
    </location>
</feature>
<feature type="compositionally biased region" description="Basic and acidic residues" evidence="5">
    <location>
        <begin position="1089"/>
        <end position="1098"/>
    </location>
</feature>
<feature type="compositionally biased region" description="Low complexity" evidence="5">
    <location>
        <begin position="1178"/>
        <end position="1188"/>
    </location>
</feature>
<feature type="compositionally biased region" description="Low complexity" evidence="5">
    <location>
        <begin position="1197"/>
        <end position="1214"/>
    </location>
</feature>
<feature type="active site" description="Nucleophile" evidence="3 4">
    <location>
        <position position="201"/>
    </location>
</feature>
<feature type="active site" description="Proton acceptor" evidence="3 4">
    <location>
        <position position="461"/>
    </location>
</feature>
<feature type="modified residue" description="Phosphoserine" evidence="1">
    <location>
        <position position="553"/>
    </location>
</feature>
<feature type="modified residue" description="Phosphoserine" evidence="1">
    <location>
        <position position="555"/>
    </location>
</feature>
<feature type="modified residue" description="Phosphothreonine" evidence="1">
    <location>
        <position position="717"/>
    </location>
</feature>
<feature type="modified residue" description="Phosphoserine" evidence="1">
    <location>
        <position position="727"/>
    </location>
</feature>
<feature type="modified residue" description="Phosphoserine" evidence="1">
    <location>
        <position position="729"/>
    </location>
</feature>
<feature type="modified residue" description="Phosphoserine" evidence="1">
    <location>
        <position position="891"/>
    </location>
</feature>
<feature type="modified residue" description="Phosphothreonine" evidence="1">
    <location>
        <position position="894"/>
    </location>
</feature>
<feature type="modified residue" description="Phosphoserine" evidence="1">
    <location>
        <position position="897"/>
    </location>
</feature>
<feature type="modified residue" description="Phosphothreonine" evidence="1">
    <location>
        <position position="951"/>
    </location>
</feature>
<accession>B4LG38</accession>
<protein>
    <recommendedName>
        <fullName>Ubiquitin carboxyl-terminal hydrolase 36</fullName>
        <ecNumber>3.4.19.12</ecNumber>
    </recommendedName>
    <alternativeName>
        <fullName>Deubiquitinating enzyme 36</fullName>
    </alternativeName>
    <alternativeName>
        <fullName>Protein scrawny</fullName>
    </alternativeName>
    <alternativeName>
        <fullName>Ubiquitin thioesterase 36</fullName>
    </alternativeName>
    <alternativeName>
        <fullName>Ubiquitin-specific-processing protease 36</fullName>
    </alternativeName>
</protein>
<gene>
    <name type="primary">Usp36</name>
    <name type="synonym">scny</name>
    <name type="ORF">GJ13192</name>
</gene>
<proteinExistence type="inferred from homology"/>
<keyword id="KW-0378">Hydrolase</keyword>
<keyword id="KW-0539">Nucleus</keyword>
<keyword id="KW-0597">Phosphoprotein</keyword>
<keyword id="KW-0645">Protease</keyword>
<keyword id="KW-1185">Reference proteome</keyword>
<keyword id="KW-0788">Thiol protease</keyword>
<keyword id="KW-0833">Ubl conjugation pathway</keyword>
<organism>
    <name type="scientific">Drosophila virilis</name>
    <name type="common">Fruit fly</name>
    <dbReference type="NCBI Taxonomy" id="7244"/>
    <lineage>
        <taxon>Eukaryota</taxon>
        <taxon>Metazoa</taxon>
        <taxon>Ecdysozoa</taxon>
        <taxon>Arthropoda</taxon>
        <taxon>Hexapoda</taxon>
        <taxon>Insecta</taxon>
        <taxon>Pterygota</taxon>
        <taxon>Neoptera</taxon>
        <taxon>Endopterygota</taxon>
        <taxon>Diptera</taxon>
        <taxon>Brachycera</taxon>
        <taxon>Muscomorpha</taxon>
        <taxon>Ephydroidea</taxon>
        <taxon>Drosophilidae</taxon>
        <taxon>Drosophila</taxon>
    </lineage>
</organism>
<sequence>MPVSLAVCETANVVNAALRESLGSGIGGGGGCVAAAASRSSAGSGSGSVAGVDEAKIGDVSGTDNLQSQIVANAKRVLLAKIEYEEVENYHESVLAKLKSKYIVIKPDNNNGAANCNYKTNGKAVGSNGHDNNTVNGGTVNGNRKQTVDSGQSNQNSSANPNELPKPKRVLYPRENIRIGWKQSERKWQVGAGMLNVGNTCYLNSTLQALFHIPALANWLVSETSHVENCNISESCGSGGCIICAMAKTLQTTQSNQSAVRPFLIYTKLRQICKHMVVGRQEDAHEFLRFLVEAMEKAYLMRFRNFKELDQLVKETTPISQIFGGYLRSEVRCLSCNHVSITFQHFQDLLLDIRKADTLEEAFDGYFSRERLEDMGYKCEGCKKKVSATKQFSLERAPITLCIQLKRFSMMGNKLTKQISFKPRIDLSRFAARSPTAAAQPLSYRLVSMVTHLGVSQHCGHYTAIGLTEAGSYYNFDDSYVKPIAMQSVCNTNAYIMFYELDVANSSSSSTINNNSSSSSNNSVAPKLNGLRLSNGAHSPAAATVAVAATATSTSASAVSPRFIGPQLPNGYANSNGHALGGAKTTIQFKTTPQKQLQQQQQQQNGLLMGANKFQESSQSKHSLAGTLHKGEAAPNANTNANANKSSCNNNITSQHQQQHILPISSDEDEDEDDSDDDDDDDDDDVKANTAPQLPSMPKMFEDSESVAQTAKLKPKTPLKSLVPYESASEEEQEQQQQQQQQQLLQTPQQLAANPRKRRSGSDSSESEEEAPPPLPSILRNGHAKTNGSVSNTSNSSHSKAKSASNASSANVNSSKQKTDAIDEIFKSLNNYKNKHRIAADDDEDGDGDGDGHGNEQVQTEQGTKKLNSASSASASKSNGWQSQNGKAPSSPKTPPSPAVIKSKTGIWQITRTNDDDDEEDEEEDDVEADADQEDDDDEVVVVEEPQVSVTPKNPKNPFAASKSAEANATIAGAKRQKLLNGSAKSAATTRPGNGYQSESVANGSAVSELLKQNHRGYGTSVLSWNGKPSELDKESFDLVCAKRIAGHGDTDVHSDVNSSSNNSSNINSNSNSNSNGNGKRKNSTLLAEAREQRKRDAEDEEENEMDRGRQRKVKSASVKSNNSTPGYNPFQEFENQKRWHSNKSGTFPRFYHQNNRPNFQQRNKFKFNRFGGGAKFQQQRALQRHLAAGGGFTRRQQQSTGQQQQQQQQQQQS</sequence>